<dbReference type="EMBL" id="AF007261">
    <property type="protein sequence ID" value="AAD11912.1"/>
    <property type="molecule type" value="Genomic_DNA"/>
</dbReference>
<dbReference type="PIR" id="S78179">
    <property type="entry name" value="S78179"/>
</dbReference>
<dbReference type="RefSeq" id="NP_044797.1">
    <property type="nucleotide sequence ID" value="NC_001823.1"/>
</dbReference>
<dbReference type="SMR" id="P80482"/>
<dbReference type="GeneID" id="801073"/>
<dbReference type="UniPathway" id="UPA00223"/>
<dbReference type="GO" id="GO:0005743">
    <property type="term" value="C:mitochondrial inner membrane"/>
    <property type="evidence" value="ECO:0007669"/>
    <property type="project" value="UniProtKB-SubCell"/>
</dbReference>
<dbReference type="GO" id="GO:0020037">
    <property type="term" value="F:heme binding"/>
    <property type="evidence" value="ECO:0007669"/>
    <property type="project" value="InterPro"/>
</dbReference>
<dbReference type="GO" id="GO:0046872">
    <property type="term" value="F:metal ion binding"/>
    <property type="evidence" value="ECO:0007669"/>
    <property type="project" value="UniProtKB-KW"/>
</dbReference>
<dbReference type="GO" id="GO:0006099">
    <property type="term" value="P:tricarboxylic acid cycle"/>
    <property type="evidence" value="ECO:0007669"/>
    <property type="project" value="UniProtKB-UniPathway"/>
</dbReference>
<dbReference type="CDD" id="cd03495">
    <property type="entry name" value="SQR_TypeC_SdhD_like"/>
    <property type="match status" value="1"/>
</dbReference>
<dbReference type="Gene3D" id="1.20.1300.10">
    <property type="entry name" value="Fumarate reductase/succinate dehydrogenase, transmembrane subunit"/>
    <property type="match status" value="1"/>
</dbReference>
<dbReference type="InterPro" id="IPR034804">
    <property type="entry name" value="SQR/QFR_C/D"/>
</dbReference>
<dbReference type="InterPro" id="IPR014312">
    <property type="entry name" value="Succ_DH_anchor"/>
</dbReference>
<dbReference type="InterPro" id="IPR000701">
    <property type="entry name" value="SuccDH_FuR_B_TM-su"/>
</dbReference>
<dbReference type="NCBIfam" id="TIGR02968">
    <property type="entry name" value="succ_dehyd_anc"/>
    <property type="match status" value="1"/>
</dbReference>
<dbReference type="Pfam" id="PF01127">
    <property type="entry name" value="Sdh_cyt"/>
    <property type="match status" value="1"/>
</dbReference>
<dbReference type="SUPFAM" id="SSF81343">
    <property type="entry name" value="Fumarate reductase respiratory complex transmembrane subunits"/>
    <property type="match status" value="1"/>
</dbReference>
<keyword id="KW-0249">Electron transport</keyword>
<keyword id="KW-0349">Heme</keyword>
<keyword id="KW-0408">Iron</keyword>
<keyword id="KW-0472">Membrane</keyword>
<keyword id="KW-0479">Metal-binding</keyword>
<keyword id="KW-0496">Mitochondrion</keyword>
<keyword id="KW-0999">Mitochondrion inner membrane</keyword>
<keyword id="KW-0812">Transmembrane</keyword>
<keyword id="KW-1133">Transmembrane helix</keyword>
<keyword id="KW-0813">Transport</keyword>
<keyword id="KW-0816">Tricarboxylic acid cycle</keyword>
<sequence>MTEKLLHFIRTKSGSMHWWLQRFLAILLAPIILYLLFDVAIYIGQQSDPTVMMFLNRIFNHNSIFIFITSVILIWHVRGGMEVIIEDYVHGEKTRIVSIFLIRVIAIEIMEYLYKCSIIF</sequence>
<protein>
    <recommendedName>
        <fullName>Succinate dehydrogenase membrane anchor subunit</fullName>
    </recommendedName>
    <alternativeName>
        <fullName>Succinate dehydrogenase, subunit IV</fullName>
    </alternativeName>
</protein>
<proteinExistence type="inferred from homology"/>
<feature type="chain" id="PRO_0000158713" description="Succinate dehydrogenase membrane anchor subunit">
    <location>
        <begin position="1"/>
        <end position="120"/>
    </location>
</feature>
<feature type="topological domain" description="Mitochondrial matrix" evidence="2">
    <location>
        <begin position="1"/>
        <end position="17"/>
    </location>
</feature>
<feature type="transmembrane region" description="Helical" evidence="2">
    <location>
        <begin position="18"/>
        <end position="38"/>
    </location>
</feature>
<feature type="topological domain" description="Mitochondrial intermembrane" evidence="2">
    <location>
        <begin position="39"/>
        <end position="63"/>
    </location>
</feature>
<feature type="transmembrane region" description="Helical" evidence="2">
    <location>
        <begin position="64"/>
        <end position="85"/>
    </location>
</feature>
<feature type="topological domain" description="Mitochondrial matrix" evidence="2">
    <location>
        <begin position="86"/>
        <end position="95"/>
    </location>
</feature>
<feature type="transmembrane region" description="Helical" evidence="2">
    <location>
        <begin position="96"/>
        <end position="120"/>
    </location>
</feature>
<feature type="binding site" description="axial binding residue" evidence="1">
    <location>
        <position position="76"/>
    </location>
    <ligand>
        <name>heme</name>
        <dbReference type="ChEBI" id="CHEBI:30413"/>
        <note>ligand shared with second transmembrane subunit</note>
    </ligand>
    <ligandPart>
        <name>Fe</name>
        <dbReference type="ChEBI" id="CHEBI:18248"/>
    </ligandPart>
</feature>
<feature type="binding site" evidence="1">
    <location>
        <position position="88"/>
    </location>
    <ligand>
        <name>a ubiquinone</name>
        <dbReference type="ChEBI" id="CHEBI:16389"/>
    </ligand>
</feature>
<organism>
    <name type="scientific">Reclinomonas americana</name>
    <dbReference type="NCBI Taxonomy" id="48483"/>
    <lineage>
        <taxon>Eukaryota</taxon>
        <taxon>Discoba</taxon>
        <taxon>Jakobida</taxon>
        <taxon>Histionina</taxon>
        <taxon>Histionidae</taxon>
        <taxon>Reclinomonas</taxon>
    </lineage>
</organism>
<gene>
    <name type="primary">SDH4</name>
</gene>
<geneLocation type="mitochondrion"/>
<reference key="1">
    <citation type="journal article" date="1996" name="Proc. Natl. Acad. Sci. U.S.A.">
        <title>Genes encoding the same three subunits of respiratory complex II are present in the mitochondrial DNA of two phylogenetically distant eukaryotes.</title>
        <authorList>
            <person name="Burger G."/>
            <person name="Lang B.F."/>
            <person name="Reith M."/>
            <person name="Gray M.W."/>
        </authorList>
    </citation>
    <scope>NUCLEOTIDE SEQUENCE [GENOMIC DNA]</scope>
    <source>
        <strain>ATCC 50394</strain>
    </source>
</reference>
<comment type="function">
    <text evidence="1">Membrane-anchoring subunit of succinate dehydrogenase (SDH).</text>
</comment>
<comment type="cofactor">
    <cofactor evidence="1">
        <name>heme</name>
        <dbReference type="ChEBI" id="CHEBI:30413"/>
    </cofactor>
    <text evidence="1">The heme is bound between the two transmembrane subunits.</text>
</comment>
<comment type="pathway">
    <text>Carbohydrate metabolism; tricarboxylic acid cycle.</text>
</comment>
<comment type="subunit">
    <text evidence="1">Part of an enzyme complex containing four subunits: a flavoprotein, an iron-sulfur protein, plus two membrane-anchoring proteins.</text>
</comment>
<comment type="subcellular location">
    <subcellularLocation>
        <location evidence="1">Mitochondrion inner membrane</location>
        <topology>Multi-pass membrane protein</topology>
    </subcellularLocation>
</comment>
<evidence type="ECO:0000250" key="1"/>
<evidence type="ECO:0000255" key="2"/>
<accession>P80482</accession>
<name>DHSD_RECAM</name>